<evidence type="ECO:0000250" key="1">
    <source>
        <dbReference type="UniProtKB" id="Q6P9Z1"/>
    </source>
</evidence>
<evidence type="ECO:0000255" key="2">
    <source>
        <dbReference type="PROSITE-ProRule" id="PRU01273"/>
    </source>
</evidence>
<evidence type="ECO:0000256" key="3">
    <source>
        <dbReference type="SAM" id="MobiDB-lite"/>
    </source>
</evidence>
<evidence type="ECO:0000269" key="4">
    <source>
    </source>
</evidence>
<evidence type="ECO:0000269" key="5">
    <source>
    </source>
</evidence>
<evidence type="ECO:0000269" key="6">
    <source>
    </source>
</evidence>
<evidence type="ECO:0000269" key="7">
    <source>
    </source>
</evidence>
<evidence type="ECO:0000269" key="8">
    <source>
    </source>
</evidence>
<evidence type="ECO:0000303" key="9">
    <source>
    </source>
</evidence>
<evidence type="ECO:0000303" key="10">
    <source>
    </source>
</evidence>
<evidence type="ECO:0000303" key="11">
    <source>
    </source>
</evidence>
<evidence type="ECO:0000303" key="12">
    <source>
    </source>
</evidence>
<evidence type="ECO:0000303" key="13">
    <source>
    </source>
</evidence>
<evidence type="ECO:0000305" key="14"/>
<evidence type="ECO:0007744" key="15">
    <source>
    </source>
</evidence>
<evidence type="ECO:0007744" key="16">
    <source>
    </source>
</evidence>
<comment type="function">
    <text evidence="1 6 8 11 12">Involved in transcriptional activation and repression of select genes by chromatin remodeling (alteration of DNA-nucleosome topology). Component of SWI/SNF chromatin remodeling complexes that carry out key enzymatic activities, changing chromatin structure by altering DNA-histone contacts within a nucleosome in an ATP-dependent manner. Stimulates nuclear receptor mediated transcription. Belongs to the neural progenitors-specific chromatin remodeling complex (npBAF complex) and the neuron-specific chromatin remodeling complex (nBAF complex). During neural development a switch from a stem/progenitor to a postmitotic chromatin remodeling mechanism occurs as neurons exit the cell cycle and become committed to their adult state. The transition from proliferating neural stem/progenitor cells to postmitotic neurons requires a switch in subunit composition of the npBAF and nBAF complexes. As neural progenitors exit mitosis and differentiate into neurons, npBAF complexes which contain ACTL6A/BAF53A and PHF10/BAF45A, are exchanged for homologous alternative ACTL6B/BAF53B and DPF1/BAF45B or DPF3/BAF45C subunits in neuron-specific complexes (nBAF). The npBAF complex is essential for the self-renewal/proliferative capacity of the multipotent neural stem cells. The nBAF complex along with CREST plays a role regulating the activity of genes essential for dendrite growth (By similarity).</text>
</comment>
<comment type="subunit">
    <text evidence="1 4 5 6 7 11 12">Component of the multiprotein chromatin-remodeling complexes SWI/SNF: SWI/SNF-A (BAF), SWI/SNF-B (PBAF) and related complexes. The canonical complex contains a catalytic subunit (either SMARCA4/BRG1/BAF190A or SMARCA2/BRM/BAF190B) and at least SMARCE1, ACTL6A/BAF53, SMARCC1/BAF155, SMARCC2/BAF170, and SMARCB1/SNF5/BAF47. Other subunits specific to each of the complexes may also be present permitting several possible combinations developmentally and tissue specific (Probable). Component of the BAF complex, which includes at least actin (ACTB), ARID1A/BAF250A, ARID1B/BAF250B, SMARCA2/BRM, SMARCA4/BRG1/BAF190A, ACTL6A/BAF53, ACTL6B/BAF53B, SMARCE1/BAF57, SMARCC1/BAF155, SMARCC2/BAF170, SMARCB1/SNF5/INI1, and one or more SMARCD1/BAF60A, SMARCD2/BAF60B, or SMARCD3/BAF60C. In muscle cells, the BAF complex also contains DPF3 (PubMed:18765789). Component of neural progenitors-specific chromatin remodeling complex (npBAF complex) composed of at least, ARID1A/BAF250A or ARID1B/BAF250B, SMARCD1/BAF60A, SMARCD3/BAF60C, SMARCA2/BRM/BAF190B, SMARCA4/BRG1/BAF190A, SMARCB1/BAF47, SMARCC1/BAF155, SMARCE1/BAF57, SMARCC2/BAF170, PHF10/BAF45A, ACTL6A/BAF53A and actin. Component of neuron-specific chromatin remodeling complex (nBAF complex) composed of at least, ARID1A/BAF250A or ARID1B/BAF250B, SMARCD1/BAF60A, SMARCD3/BAF60C, SMARCA2/BRM/BAF190B, SMARCA4/BRG1/BAF190A, SMARCB1/BAF47, SMARCC1/BAF155, SMARCE1/BAF57, SMARCC2/BAF170, DPF1/BAF45B, DPF3/BAF45C, ACTL6B/BAF53B and actin (By similarity). May be a component of the SWI/SNF-B (PBAF) chromatin remodeling complex, at least composed of SMARCA4/BRG1, SMARCB1/BAF47/SNF5, ACTL6A/BAF53A or ACTL6B/BAF53B, SMARCE1/BAF57, SMARCD1/BAF60A, SMARCD2/BAF60B, perhaps SMARCD3/BAF60C, SMARCC1/BAF155, SMARCC2/BAF170, PBRM1/BAF180, ARID2/BAF200 and actin (PubMed:22952240, PubMed:26601204). Interacts with SMARCA4/BRG1/BAF190A (PubMed:14701856). Component of SWI/SNF (GBAF) subcomplex, which includes at least BICRA or BICRAL (mutually exclusive), BRD9, SS18, SMARCA2/BRM, SMARCA4/BRG1/BAF190A, ACTL6A/BAF53, SMARCC1/BAF155, and SMARCD1/BAF60A (PubMed:29374058). The precise distribution of the related SMARCD1, SMARCD2 and SMARCD3 proteins among these and other SWI/SNF nucleosome-remodeling complexes is not fully known. May allow recruitment of SWI/SNF containing complexes specifically to promoters where these factors are located. Also interacts with several nuclear receptors including PPARG/NR1C3, RXRA/NR1F1, ESR1, NR5A1, NR5A2/LRH1 and other transcriptional activators including the HLH protein SREBF1/SREBP1 and the homeobox protein PBX1 (PubMed:14701856). Interacts with PRDM1/BLIMP1 (PubMed:32417234).</text>
</comment>
<comment type="interaction">
    <interactant intactId="EBI-488506">
        <id>Q6STE5-1</id>
    </interactant>
    <interactant intactId="EBI-781384">
        <id>P37231</id>
        <label>PPARG</label>
    </interactant>
    <organismsDiffer>false</organismsDiffer>
    <experiments>3</experiments>
</comment>
<comment type="interaction">
    <interactant intactId="EBI-488511">
        <id>Q6STE5-2</id>
    </interactant>
    <interactant intactId="EBI-781384">
        <id>P37231</id>
        <label>PPARG</label>
    </interactant>
    <organismsDiffer>false</organismsDiffer>
    <experiments>3</experiments>
</comment>
<comment type="subcellular location">
    <subcellularLocation>
        <location evidence="4">Nucleus</location>
    </subcellularLocation>
</comment>
<comment type="alternative products">
    <event type="alternative splicing"/>
    <isoform>
        <id>Q6STE5-1</id>
        <name>1</name>
        <name>BAF60C2</name>
        <sequence type="displayed"/>
    </isoform>
    <isoform>
        <id>Q6STE5-2</id>
        <name>2</name>
        <name>BAF60C1</name>
        <sequence type="described" ref="VSP_012498"/>
    </isoform>
</comment>
<comment type="tissue specificity">
    <text>Isoform 2 and isoform 1 are expressed in brain, heart, kidney, placenta, prostate, salivary gland, spleen, testis, thyroid, trachea and uterus. Isoform 1 is also expressed in skeletal muscle and adipose tissue.</text>
</comment>
<comment type="similarity">
    <text evidence="14">Belongs to the SMARCD family.</text>
</comment>
<comment type="sequence caution" evidence="14">
    <conflict type="frameshift">
        <sequence resource="EMBL-CDS" id="AAC50697"/>
    </conflict>
</comment>
<feature type="initiator methionine" description="Removed" evidence="16">
    <location>
        <position position="1"/>
    </location>
</feature>
<feature type="chain" id="PRO_0000071988" description="SWI/SNF-related matrix-associated actin-dependent regulator of chromatin subfamily D member 3">
    <location>
        <begin position="2"/>
        <end position="483"/>
    </location>
</feature>
<feature type="domain" description="SWIB/MDM2" evidence="2">
    <location>
        <begin position="258"/>
        <end position="335"/>
    </location>
</feature>
<feature type="region of interest" description="Disordered" evidence="3">
    <location>
        <begin position="26"/>
        <end position="102"/>
    </location>
</feature>
<feature type="compositionally biased region" description="Low complexity" evidence="3">
    <location>
        <begin position="78"/>
        <end position="87"/>
    </location>
</feature>
<feature type="modified residue" description="N-acetylalanine" evidence="16">
    <location>
        <position position="2"/>
    </location>
</feature>
<feature type="modified residue" description="Phosphoserine" evidence="15">
    <location>
        <position position="178"/>
    </location>
</feature>
<feature type="splice variant" id="VSP_012498" description="In isoform 2." evidence="9 10 13">
    <original>MAADEVAGGARKATKSKLFEFLVHGV</original>
    <variation>MTPGLQHPPTVVQ</variation>
    <location>
        <begin position="1"/>
        <end position="26"/>
    </location>
</feature>
<feature type="sequence variant" id="VAR_020884" description="In dbSNP:rs1050101." evidence="4">
    <original>P</original>
    <variation>S</variation>
    <location>
        <position position="170"/>
    </location>
</feature>
<feature type="sequence conflict" description="In Ref. 1; AAC50697." evidence="14" ref="1">
    <original>V</original>
    <variation>E</variation>
    <location>
        <position position="88"/>
    </location>
</feature>
<feature type="sequence conflict" description="In Ref. 1; AAC50697." evidence="14" ref="1">
    <original>R</original>
    <variation>G</variation>
    <location>
        <position position="140"/>
    </location>
</feature>
<feature type="sequence conflict" description="In Ref. 1; AAC50697." evidence="14" ref="1">
    <original>A</original>
    <variation>P</variation>
    <location>
        <position position="387"/>
    </location>
</feature>
<sequence>MAADEVAGGARKATKSKLFEFLVHGVRPGMPSGARMPHQGAPMGPPGSPYMGSPAVRPGLAPAGMEPARKRAAPPPGQSQAQSQGQPVPTAPARSRSAKRRKMADKILPQRIRELVPESQAYMDLLAFERKLDQTIMRKRVDIQEALKRPMKQKRKLRLYISNTFNPAKPDAEDSDGSIASWELRVEGKLLDDPSKQKRKFSSFFKSLVIELDKDLYGPDNHLVEWHRTPTTQETDGFQVKRPGDLSVRCTLLLMLDYQPPQFKLDPRLARLLGLHTQSRSAIVQALWQYVKTNRLQDSHDKEYINGDKYFQQIFDCPRLKFSEIPQRLTALLLPPDPIVINHVISVDPSDQKKTACYDIDVEVEEPLKGQMSSFLLSTANQQEISALDSKIHETIESINQLKIQRDFMLSFSRDPKGYVQDLLRSQSRDLKVMTDVAGNPEEERRAEFYHQPWSQEAVSRYFYCKIQQRRQELEQSLVVRNT</sequence>
<reference key="1">
    <citation type="journal article" date="1996" name="Genes Dev.">
        <title>Diversity and specialization of mammalian SWI/SNF complexes.</title>
        <authorList>
            <person name="Wang W."/>
            <person name="Xue Y."/>
            <person name="Zhou S."/>
            <person name="Kuo A."/>
            <person name="Cairns B.R."/>
            <person name="Crabtree G.R."/>
        </authorList>
    </citation>
    <scope>NUCLEOTIDE SEQUENCE [MRNA] (ISOFORM 2)</scope>
    <scope>FUNCTION</scope>
</reference>
<reference key="2">
    <citation type="journal article" date="2004" name="J. Biol. Chem.">
        <title>Transcription factors and nuclear receptors interact with the SWI/SNF complex through the BAF60c subunit.</title>
        <authorList>
            <person name="Debril M.-B."/>
            <person name="Gelman L."/>
            <person name="Fayard E."/>
            <person name="Annicotte J.-S."/>
            <person name="Rocchi S."/>
            <person name="Auwerx J."/>
        </authorList>
    </citation>
    <scope>NUCLEOTIDE SEQUENCE [MRNA] (ISOFORMS 1 AND 2)</scope>
    <scope>SUBCELLULAR LOCATION</scope>
    <scope>INTERACTION WITH SMARCA4 AND TRANSCRIPTIONAL ACTIVATORS</scope>
    <scope>VARIANT SER-170</scope>
    <source>
        <tissue>Adipose tissue</tissue>
    </source>
</reference>
<reference key="3">
    <citation type="journal article" date="2003" name="Nature">
        <title>The DNA sequence of human chromosome 7.</title>
        <authorList>
            <person name="Hillier L.W."/>
            <person name="Fulton R.S."/>
            <person name="Fulton L.A."/>
            <person name="Graves T.A."/>
            <person name="Pepin K.H."/>
            <person name="Wagner-McPherson C."/>
            <person name="Layman D."/>
            <person name="Maas J."/>
            <person name="Jaeger S."/>
            <person name="Walker R."/>
            <person name="Wylie K."/>
            <person name="Sekhon M."/>
            <person name="Becker M.C."/>
            <person name="O'Laughlin M.D."/>
            <person name="Schaller M.E."/>
            <person name="Fewell G.A."/>
            <person name="Delehaunty K.D."/>
            <person name="Miner T.L."/>
            <person name="Nash W.E."/>
            <person name="Cordes M."/>
            <person name="Du H."/>
            <person name="Sun H."/>
            <person name="Edwards J."/>
            <person name="Bradshaw-Cordum H."/>
            <person name="Ali J."/>
            <person name="Andrews S."/>
            <person name="Isak A."/>
            <person name="Vanbrunt A."/>
            <person name="Nguyen C."/>
            <person name="Du F."/>
            <person name="Lamar B."/>
            <person name="Courtney L."/>
            <person name="Kalicki J."/>
            <person name="Ozersky P."/>
            <person name="Bielicki L."/>
            <person name="Scott K."/>
            <person name="Holmes A."/>
            <person name="Harkins R."/>
            <person name="Harris A."/>
            <person name="Strong C.M."/>
            <person name="Hou S."/>
            <person name="Tomlinson C."/>
            <person name="Dauphin-Kohlberg S."/>
            <person name="Kozlowicz-Reilly A."/>
            <person name="Leonard S."/>
            <person name="Rohlfing T."/>
            <person name="Rock S.M."/>
            <person name="Tin-Wollam A.-M."/>
            <person name="Abbott A."/>
            <person name="Minx P."/>
            <person name="Maupin R."/>
            <person name="Strowmatt C."/>
            <person name="Latreille P."/>
            <person name="Miller N."/>
            <person name="Johnson D."/>
            <person name="Murray J."/>
            <person name="Woessner J.P."/>
            <person name="Wendl M.C."/>
            <person name="Yang S.-P."/>
            <person name="Schultz B.R."/>
            <person name="Wallis J.W."/>
            <person name="Spieth J."/>
            <person name="Bieri T.A."/>
            <person name="Nelson J.O."/>
            <person name="Berkowicz N."/>
            <person name="Wohldmann P.E."/>
            <person name="Cook L.L."/>
            <person name="Hickenbotham M.T."/>
            <person name="Eldred J."/>
            <person name="Williams D."/>
            <person name="Bedell J.A."/>
            <person name="Mardis E.R."/>
            <person name="Clifton S.W."/>
            <person name="Chissoe S.L."/>
            <person name="Marra M.A."/>
            <person name="Raymond C."/>
            <person name="Haugen E."/>
            <person name="Gillett W."/>
            <person name="Zhou Y."/>
            <person name="James R."/>
            <person name="Phelps K."/>
            <person name="Iadanoto S."/>
            <person name="Bubb K."/>
            <person name="Simms E."/>
            <person name="Levy R."/>
            <person name="Clendenning J."/>
            <person name="Kaul R."/>
            <person name="Kent W.J."/>
            <person name="Furey T.S."/>
            <person name="Baertsch R.A."/>
            <person name="Brent M.R."/>
            <person name="Keibler E."/>
            <person name="Flicek P."/>
            <person name="Bork P."/>
            <person name="Suyama M."/>
            <person name="Bailey J.A."/>
            <person name="Portnoy M.E."/>
            <person name="Torrents D."/>
            <person name="Chinwalla A.T."/>
            <person name="Gish W.R."/>
            <person name="Eddy S.R."/>
            <person name="McPherson J.D."/>
            <person name="Olson M.V."/>
            <person name="Eichler E.E."/>
            <person name="Green E.D."/>
            <person name="Waterston R.H."/>
            <person name="Wilson R.K."/>
        </authorList>
    </citation>
    <scope>NUCLEOTIDE SEQUENCE [LARGE SCALE GENOMIC DNA]</scope>
</reference>
<reference key="4">
    <citation type="submission" date="2005-09" db="EMBL/GenBank/DDBJ databases">
        <authorList>
            <person name="Mural R.J."/>
            <person name="Istrail S."/>
            <person name="Sutton G.G."/>
            <person name="Florea L."/>
            <person name="Halpern A.L."/>
            <person name="Mobarry C.M."/>
            <person name="Lippert R."/>
            <person name="Walenz B."/>
            <person name="Shatkay H."/>
            <person name="Dew I."/>
            <person name="Miller J.R."/>
            <person name="Flanigan M.J."/>
            <person name="Edwards N.J."/>
            <person name="Bolanos R."/>
            <person name="Fasulo D."/>
            <person name="Halldorsson B.V."/>
            <person name="Hannenhalli S."/>
            <person name="Turner R."/>
            <person name="Yooseph S."/>
            <person name="Lu F."/>
            <person name="Nusskern D.R."/>
            <person name="Shue B.C."/>
            <person name="Zheng X.H."/>
            <person name="Zhong F."/>
            <person name="Delcher A.L."/>
            <person name="Huson D.H."/>
            <person name="Kravitz S.A."/>
            <person name="Mouchard L."/>
            <person name="Reinert K."/>
            <person name="Remington K.A."/>
            <person name="Clark A.G."/>
            <person name="Waterman M.S."/>
            <person name="Eichler E.E."/>
            <person name="Adams M.D."/>
            <person name="Hunkapiller M.W."/>
            <person name="Myers E.W."/>
            <person name="Venter J.C."/>
        </authorList>
    </citation>
    <scope>NUCLEOTIDE SEQUENCE [LARGE SCALE GENOMIC DNA]</scope>
</reference>
<reference key="5">
    <citation type="journal article" date="2004" name="Genome Res.">
        <title>The status, quality, and expansion of the NIH full-length cDNA project: the Mammalian Gene Collection (MGC).</title>
        <authorList>
            <consortium name="The MGC Project Team"/>
        </authorList>
    </citation>
    <scope>NUCLEOTIDE SEQUENCE [LARGE SCALE MRNA] (ISOFORM 2)</scope>
    <source>
        <tissue>Blood</tissue>
        <tissue>Uterus</tissue>
    </source>
</reference>
<reference key="6">
    <citation type="journal article" date="2006" name="Cell">
        <title>Global, in vivo, and site-specific phosphorylation dynamics in signaling networks.</title>
        <authorList>
            <person name="Olsen J.V."/>
            <person name="Blagoev B."/>
            <person name="Gnad F."/>
            <person name="Macek B."/>
            <person name="Kumar C."/>
            <person name="Mortensen P."/>
            <person name="Mann M."/>
        </authorList>
    </citation>
    <scope>PHOSPHORYLATION [LARGE SCALE ANALYSIS] AT SER-178</scope>
    <scope>IDENTIFICATION BY MASS SPECTROMETRY [LARGE SCALE ANALYSIS]</scope>
    <source>
        <tissue>Cervix carcinoma</tissue>
    </source>
</reference>
<reference key="7">
    <citation type="journal article" date="2008" name="Genes Dev.">
        <title>Regulation of muscle development by DPF3, a novel histone acetylation and methylation reader of the BAF chromatin remodeling complex.</title>
        <authorList>
            <person name="Lange M."/>
            <person name="Kaynak B."/>
            <person name="Forster U.B."/>
            <person name="Toenjes M."/>
            <person name="Fischer J.J."/>
            <person name="Grimm C."/>
            <person name="Schlesinger J."/>
            <person name="Just S."/>
            <person name="Dunkel I."/>
            <person name="Krueger T."/>
            <person name="Mebus S."/>
            <person name="Lehrach H."/>
            <person name="Lurz R."/>
            <person name="Gobom J."/>
            <person name="Rottbauer W."/>
            <person name="Abdelilah-Seyfried S."/>
            <person name="Sperling S."/>
        </authorList>
    </citation>
    <scope>IDENTIFICATION IN THE BAF COMPLEX</scope>
    <scope>IDENTIFICATION BY MASS SPECTROMETRY</scope>
</reference>
<reference key="8">
    <citation type="journal article" date="2010" name="Sci. Signal.">
        <title>Quantitative phosphoproteomics reveals widespread full phosphorylation site occupancy during mitosis.</title>
        <authorList>
            <person name="Olsen J.V."/>
            <person name="Vermeulen M."/>
            <person name="Santamaria A."/>
            <person name="Kumar C."/>
            <person name="Miller M.L."/>
            <person name="Jensen L.J."/>
            <person name="Gnad F."/>
            <person name="Cox J."/>
            <person name="Jensen T.S."/>
            <person name="Nigg E.A."/>
            <person name="Brunak S."/>
            <person name="Mann M."/>
        </authorList>
    </citation>
    <scope>IDENTIFICATION BY MASS SPECTROMETRY [LARGE SCALE ANALYSIS]</scope>
    <source>
        <tissue>Cervix carcinoma</tissue>
    </source>
</reference>
<reference key="9">
    <citation type="journal article" date="2012" name="Proc. Natl. Acad. Sci. U.S.A.">
        <title>N-terminal acetylome analyses and functional insights of the N-terminal acetyltransferase NatB.</title>
        <authorList>
            <person name="Van Damme P."/>
            <person name="Lasa M."/>
            <person name="Polevoda B."/>
            <person name="Gazquez C."/>
            <person name="Elosegui-Artola A."/>
            <person name="Kim D.S."/>
            <person name="De Juan-Pardo E."/>
            <person name="Demeyer K."/>
            <person name="Hole K."/>
            <person name="Larrea E."/>
            <person name="Timmerman E."/>
            <person name="Prieto J."/>
            <person name="Arnesen T."/>
            <person name="Sherman F."/>
            <person name="Gevaert K."/>
            <person name="Aldabe R."/>
        </authorList>
    </citation>
    <scope>ACETYLATION [LARGE SCALE ANALYSIS] AT ALA-2</scope>
    <scope>CLEAVAGE OF INITIATOR METHIONINE [LARGE SCALE ANALYSIS]</scope>
    <scope>IDENTIFICATION BY MASS SPECTROMETRY [LARGE SCALE ANALYSIS]</scope>
</reference>
<reference key="10">
    <citation type="journal article" date="2012" name="J. Biol. Chem.">
        <title>SWI/SNF chromatin-remodeling factors: multiscale analyses and diverse functions.</title>
        <authorList>
            <person name="Euskirchen G."/>
            <person name="Auerbach R.K."/>
            <person name="Snyder M."/>
        </authorList>
    </citation>
    <scope>REVIEW ON SWI/SNF CHROMATIN REMODELING COMPLEXES</scope>
</reference>
<reference key="11">
    <citation type="journal article" date="2015" name="Sci. Adv.">
        <title>Mammalian SWI/SNF chromatin remodeling complexes and cancer: Mechanistic insights gained from human genomics.</title>
        <authorList>
            <person name="Kadoch C."/>
            <person name="Crabtree G.R."/>
        </authorList>
    </citation>
    <scope>REVIEW ON SWI/SNF CHROMATIN REMODELING COMPLEXES</scope>
</reference>
<reference key="12">
    <citation type="journal article" date="2018" name="J. Biol. Chem.">
        <title>Glioma tumor suppressor candidate region gene 1 (GLTSCR1) and its paralog GLTSCR1-like form SWI/SNF chromatin remodeling subcomplexes.</title>
        <authorList>
            <person name="Alpsoy A."/>
            <person name="Dykhuizen E.C."/>
        </authorList>
    </citation>
    <scope>FUNCTION</scope>
    <scope>IDENTIFICATION IN THE GBAF COMPLEX</scope>
</reference>
<reference key="13">
    <citation type="journal article" date="2020" name="Biochim. Biophys. Acta">
        <title>LDB1 and the SWI/SNF complex participate in both transcriptional activation and repression by Caenorhabditis elegans BLIMP1/PRDM1.</title>
        <authorList>
            <person name="Fong H.T."/>
            <person name="Hagen T."/>
            <person name="Inoue T."/>
        </authorList>
    </citation>
    <scope>INTERACTION WITH PRDM1</scope>
</reference>
<name>SMRD3_HUMAN</name>
<accession>Q6STE5</accession>
<accession>D3DX10</accession>
<accession>Q2YD86</accession>
<accession>Q75MJ2</accession>
<accession>Q75MR8</accession>
<accession>Q92926</accession>
<accession>Q9BUH1</accession>
<keyword id="KW-0007">Acetylation</keyword>
<keyword id="KW-0025">Alternative splicing</keyword>
<keyword id="KW-0156">Chromatin regulator</keyword>
<keyword id="KW-0524">Neurogenesis</keyword>
<keyword id="KW-0539">Nucleus</keyword>
<keyword id="KW-0597">Phosphoprotein</keyword>
<keyword id="KW-1267">Proteomics identification</keyword>
<keyword id="KW-1185">Reference proteome</keyword>
<keyword id="KW-0804">Transcription</keyword>
<keyword id="KW-0805">Transcription regulation</keyword>
<gene>
    <name type="primary">SMARCD3</name>
    <name type="synonym">BAF60C</name>
</gene>
<protein>
    <recommendedName>
        <fullName>SWI/SNF-related matrix-associated actin-dependent regulator of chromatin subfamily D member 3</fullName>
    </recommendedName>
    <alternativeName>
        <fullName>60 kDa BRG-1/Brm-associated factor subunit C</fullName>
    </alternativeName>
    <alternativeName>
        <fullName>BRG1-associated factor 60C</fullName>
        <shortName>BAF60C</shortName>
    </alternativeName>
</protein>
<proteinExistence type="evidence at protein level"/>
<dbReference type="EMBL" id="U66619">
    <property type="protein sequence ID" value="AAC50697.1"/>
    <property type="status" value="ALT_FRAME"/>
    <property type="molecule type" value="mRNA"/>
</dbReference>
<dbReference type="EMBL" id="AY450430">
    <property type="protein sequence ID" value="AAR88510.1"/>
    <property type="molecule type" value="mRNA"/>
</dbReference>
<dbReference type="EMBL" id="AY450431">
    <property type="protein sequence ID" value="AAR88511.1"/>
    <property type="molecule type" value="mRNA"/>
</dbReference>
<dbReference type="EMBL" id="AC021097">
    <property type="protein sequence ID" value="AAS00380.1"/>
    <property type="molecule type" value="Genomic_DNA"/>
</dbReference>
<dbReference type="EMBL" id="AC005486">
    <property type="protein sequence ID" value="AAS02031.1"/>
    <property type="molecule type" value="Genomic_DNA"/>
</dbReference>
<dbReference type="EMBL" id="CH471173">
    <property type="protein sequence ID" value="EAW54005.1"/>
    <property type="molecule type" value="Genomic_DNA"/>
</dbReference>
<dbReference type="EMBL" id="CH471173">
    <property type="protein sequence ID" value="EAW54007.1"/>
    <property type="molecule type" value="Genomic_DNA"/>
</dbReference>
<dbReference type="EMBL" id="CH471173">
    <property type="protein sequence ID" value="EAW54008.1"/>
    <property type="molecule type" value="Genomic_DNA"/>
</dbReference>
<dbReference type="EMBL" id="BC002628">
    <property type="protein sequence ID" value="AAH02628.1"/>
    <property type="molecule type" value="mRNA"/>
</dbReference>
<dbReference type="EMBL" id="BC110350">
    <property type="protein sequence ID" value="AAI10351.1"/>
    <property type="molecule type" value="mRNA"/>
</dbReference>
<dbReference type="CCDS" id="CCDS34780.1">
    <molecule id="Q6STE5-1"/>
</dbReference>
<dbReference type="CCDS" id="CCDS5924.1">
    <molecule id="Q6STE5-2"/>
</dbReference>
<dbReference type="RefSeq" id="NP_001003801.1">
    <molecule id="Q6STE5-1"/>
    <property type="nucleotide sequence ID" value="NM_001003801.2"/>
</dbReference>
<dbReference type="RefSeq" id="NP_001003802.1">
    <molecule id="Q6STE5-2"/>
    <property type="nucleotide sequence ID" value="NM_001003802.2"/>
</dbReference>
<dbReference type="RefSeq" id="NP_003069.2">
    <molecule id="Q6STE5-2"/>
    <property type="nucleotide sequence ID" value="NM_003078.3"/>
</dbReference>
<dbReference type="SMR" id="Q6STE5"/>
<dbReference type="BioGRID" id="112488">
    <property type="interactions" value="94"/>
</dbReference>
<dbReference type="ComplexPortal" id="CPX-1164">
    <property type="entry name" value="SWI/SNF ATP-dependent chromatin remodeling complex, ACTL6A-ARID1A-SMARCA2 variant"/>
</dbReference>
<dbReference type="ComplexPortal" id="CPX-1194">
    <property type="entry name" value="Muscle cell-specific SWI/SNF ATP-dependent chromatin remodeling complex, ACTL6A-ARID1A-SMARCA2 variant"/>
</dbReference>
<dbReference type="ComplexPortal" id="CPX-1201">
    <property type="entry name" value="Neural progenitor-specific SWI/SNF ATP-dependent chromatin remodeling complex, ARID1A-SMARCA2 variant"/>
</dbReference>
<dbReference type="ComplexPortal" id="CPX-1202">
    <property type="entry name" value="Neuron-specific SWI/SNF ATP-dependent chromatin remodeling complex, ARID1A-SMARCA2 variant"/>
</dbReference>
<dbReference type="ComplexPortal" id="CPX-1204">
    <property type="entry name" value="SWI/SNF ATP-dependent chromatin remodeling complex, ACTL6A-ARID1A-SMARCA4 variant"/>
</dbReference>
<dbReference type="ComplexPortal" id="CPX-1205">
    <property type="entry name" value="SWI/SNF ATP-dependent chromatin remodeling complex, ACTL6A-ARID1B-SMARCA2 variant"/>
</dbReference>
<dbReference type="ComplexPortal" id="CPX-1206">
    <property type="entry name" value="SWI/SNF ATP-dependent chromatin remodeling complex, ACTL6A-ARID1B-SMARCA4 variant"/>
</dbReference>
<dbReference type="ComplexPortal" id="CPX-1207">
    <property type="entry name" value="SWI/SNF ATP-dependent chromatin remodeling complex, ACTL6B-ARID1A-SMARCA2 variant"/>
</dbReference>
<dbReference type="ComplexPortal" id="CPX-1209">
    <property type="entry name" value="SWI/SNF ATP-dependent chromatin remodeling complex, ACTL6B-ARID1A-SMARCA4 variant"/>
</dbReference>
<dbReference type="ComplexPortal" id="CPX-1210">
    <property type="entry name" value="SWI/SNF ATP-dependent chromatin remodeling complex, ACTL6B-ARID1B-SMARCA2 variant"/>
</dbReference>
<dbReference type="ComplexPortal" id="CPX-1211">
    <property type="entry name" value="SWI/SNF ATP-dependent chromatin remodeling complex, ACTL6B-ARID1B-SMARCA4 variant"/>
</dbReference>
<dbReference type="ComplexPortal" id="CPX-1212">
    <property type="entry name" value="Neural progenitor-specific SWI/SNF ATP-dependent chromatin remodeling complex, ARID1A-SMARCA4 variant"/>
</dbReference>
<dbReference type="ComplexPortal" id="CPX-1213">
    <property type="entry name" value="Neural progenitor-specific SWI/SNF ATP-dependent chromatin remodeling complex, ARID1B-SMARCA2 variant"/>
</dbReference>
<dbReference type="ComplexPortal" id="CPX-1215">
    <property type="entry name" value="Neural progenitor-specific SWI/SNF ATP-dependent chromatin remodeling complex, ARID1B-SMARCA4 variant"/>
</dbReference>
<dbReference type="ComplexPortal" id="CPX-1216">
    <property type="entry name" value="Neuron-specific SWI/SNF ATP-dependent chromatin remodeling complex, ARID1A-SMARCA4 variant"/>
</dbReference>
<dbReference type="ComplexPortal" id="CPX-1217">
    <property type="entry name" value="Neuron-specific SWI/SNF ATP-dependent chromatin remodeling complex, ARID1B-SMARCA2 variant"/>
</dbReference>
<dbReference type="ComplexPortal" id="CPX-1218">
    <property type="entry name" value="Neuron-specific SWI/SNF ATP-dependent chromatin remodeling complex, ARID1B-SMARCA4 variant"/>
</dbReference>
<dbReference type="ComplexPortal" id="CPX-1222">
    <property type="entry name" value="Muscle cell-specific SWI/SNF ATP-dependent chromatin remodeling complex, ACTL6A-ARID1A-SMARCA4 variant"/>
</dbReference>
<dbReference type="ComplexPortal" id="CPX-1223">
    <property type="entry name" value="Muscle cell-specific SWI/SNF ATP-dependent chromatin remodeling complex, ACTL6A-ARID1B-SMARCA2 variant"/>
</dbReference>
<dbReference type="ComplexPortal" id="CPX-1224">
    <property type="entry name" value="Muscle cell-specific SWI/SNF ATP-dependent chromatin remodeling complex, ACTL6A-ARID1B-SMARCA4 variant"/>
</dbReference>
<dbReference type="ComplexPortal" id="CPX-1225">
    <property type="entry name" value="Muscle cell-specific SWI/SNF ATP-dependent chromatin remodeling complex, ACTL6B-ARID1A-SMARCA2 variant"/>
</dbReference>
<dbReference type="ComplexPortal" id="CPX-1226">
    <property type="entry name" value="Muscle cell-specific SWI/SNF ATP-dependent chromatin remodeling complex, ACTL6B-ARID1A-SMARCA4 variant"/>
</dbReference>
<dbReference type="ComplexPortal" id="CPX-1227">
    <property type="entry name" value="Muscle cell-specific SWI/SNF ATP-dependent chromatin remodeling complex, ACTL6B-ARID1B-SMARCA2 variant"/>
</dbReference>
<dbReference type="ComplexPortal" id="CPX-1228">
    <property type="entry name" value="Muscle cell-specific SWI/SNF ATP-dependent chromatin remodeling complex, ACTL6B-ARID1B-SMARCA4 variant"/>
</dbReference>
<dbReference type="CORUM" id="Q6STE5"/>
<dbReference type="DIP" id="DIP-33012N"/>
<dbReference type="FunCoup" id="Q6STE5">
    <property type="interactions" value="1493"/>
</dbReference>
<dbReference type="IntAct" id="Q6STE5">
    <property type="interactions" value="54"/>
</dbReference>
<dbReference type="MINT" id="Q6STE5"/>
<dbReference type="STRING" id="9606.ENSP00000262188"/>
<dbReference type="GlyGen" id="Q6STE5">
    <property type="glycosylation" value="1 site, 1 O-linked glycan (1 site)"/>
</dbReference>
<dbReference type="iPTMnet" id="Q6STE5"/>
<dbReference type="MetOSite" id="Q6STE5"/>
<dbReference type="PhosphoSitePlus" id="Q6STE5"/>
<dbReference type="BioMuta" id="SMARCD3"/>
<dbReference type="DMDM" id="57013057"/>
<dbReference type="jPOST" id="Q6STE5"/>
<dbReference type="MassIVE" id="Q6STE5"/>
<dbReference type="PaxDb" id="9606-ENSP00000262188"/>
<dbReference type="PeptideAtlas" id="Q6STE5"/>
<dbReference type="ProteomicsDB" id="67360">
    <molecule id="Q6STE5-1"/>
</dbReference>
<dbReference type="ProteomicsDB" id="67361">
    <molecule id="Q6STE5-2"/>
</dbReference>
<dbReference type="Pumba" id="Q6STE5"/>
<dbReference type="Antibodypedia" id="18748">
    <property type="antibodies" value="258 antibodies from 28 providers"/>
</dbReference>
<dbReference type="DNASU" id="6604"/>
<dbReference type="Ensembl" id="ENST00000262188.13">
    <molecule id="Q6STE5-1"/>
    <property type="protein sequence ID" value="ENSP00000262188.8"/>
    <property type="gene ID" value="ENSG00000082014.17"/>
</dbReference>
<dbReference type="Ensembl" id="ENST00000356800.6">
    <molecule id="Q6STE5-2"/>
    <property type="protein sequence ID" value="ENSP00000349254.2"/>
    <property type="gene ID" value="ENSG00000082014.17"/>
</dbReference>
<dbReference type="Ensembl" id="ENST00000392811.6">
    <molecule id="Q6STE5-2"/>
    <property type="protein sequence ID" value="ENSP00000376558.2"/>
    <property type="gene ID" value="ENSG00000082014.17"/>
</dbReference>
<dbReference type="GeneID" id="6604"/>
<dbReference type="KEGG" id="hsa:6604"/>
<dbReference type="MANE-Select" id="ENST00000262188.13">
    <property type="protein sequence ID" value="ENSP00000262188.8"/>
    <property type="RefSeq nucleotide sequence ID" value="NM_001003801.2"/>
    <property type="RefSeq protein sequence ID" value="NP_001003801.1"/>
</dbReference>
<dbReference type="UCSC" id="uc003wjs.4">
    <molecule id="Q6STE5-1"/>
    <property type="organism name" value="human"/>
</dbReference>
<dbReference type="AGR" id="HGNC:11108"/>
<dbReference type="CTD" id="6604"/>
<dbReference type="DisGeNET" id="6604"/>
<dbReference type="GeneCards" id="SMARCD3"/>
<dbReference type="HGNC" id="HGNC:11108">
    <property type="gene designation" value="SMARCD3"/>
</dbReference>
<dbReference type="HPA" id="ENSG00000082014">
    <property type="expression patterns" value="Tissue enhanced (brain, skeletal muscle)"/>
</dbReference>
<dbReference type="MIM" id="601737">
    <property type="type" value="gene"/>
</dbReference>
<dbReference type="neXtProt" id="NX_Q6STE5"/>
<dbReference type="OpenTargets" id="ENSG00000082014"/>
<dbReference type="PharmGKB" id="PA35958"/>
<dbReference type="VEuPathDB" id="HostDB:ENSG00000082014"/>
<dbReference type="eggNOG" id="KOG2570">
    <property type="taxonomic scope" value="Eukaryota"/>
</dbReference>
<dbReference type="GeneTree" id="ENSGT00940000158945"/>
<dbReference type="HOGENOM" id="CLU_023529_0_2_1"/>
<dbReference type="InParanoid" id="Q6STE5"/>
<dbReference type="OMA" id="VMDSKHH"/>
<dbReference type="OrthoDB" id="10263741at2759"/>
<dbReference type="PAN-GO" id="Q6STE5">
    <property type="GO annotations" value="4 GO annotations based on evolutionary models"/>
</dbReference>
<dbReference type="PhylomeDB" id="Q6STE5"/>
<dbReference type="TreeFam" id="TF106486"/>
<dbReference type="PathwayCommons" id="Q6STE5"/>
<dbReference type="Reactome" id="R-HSA-1368082">
    <property type="pathway name" value="RORA activates gene expression"/>
</dbReference>
<dbReference type="Reactome" id="R-HSA-1368108">
    <property type="pathway name" value="BMAL1:CLOCK,NPAS2 activates circadian gene expression"/>
</dbReference>
<dbReference type="Reactome" id="R-HSA-1989781">
    <property type="pathway name" value="PPARA activates gene expression"/>
</dbReference>
<dbReference type="Reactome" id="R-HSA-2151201">
    <property type="pathway name" value="Transcriptional activation of mitochondrial biogenesis"/>
</dbReference>
<dbReference type="Reactome" id="R-HSA-2426168">
    <property type="pathway name" value="Activation of gene expression by SREBF (SREBP)"/>
</dbReference>
<dbReference type="Reactome" id="R-HSA-3214858">
    <property type="pathway name" value="RMTs methylate histone arginines"/>
</dbReference>
<dbReference type="Reactome" id="R-HSA-381340">
    <property type="pathway name" value="Transcriptional regulation of white adipocyte differentiation"/>
</dbReference>
<dbReference type="Reactome" id="R-HSA-400206">
    <property type="pathway name" value="Regulation of lipid metabolism by PPARalpha"/>
</dbReference>
<dbReference type="Reactome" id="R-HSA-400253">
    <property type="pathway name" value="Circadian Clock"/>
</dbReference>
<dbReference type="Reactome" id="R-HSA-8939243">
    <property type="pathway name" value="RUNX1 interacts with co-factors whose precise effect on RUNX1 targets is not known"/>
</dbReference>
<dbReference type="Reactome" id="R-HSA-9707564">
    <property type="pathway name" value="Cytoprotection by HMOX1"/>
</dbReference>
<dbReference type="Reactome" id="R-HSA-9707616">
    <property type="pathway name" value="Heme signaling"/>
</dbReference>
<dbReference type="Reactome" id="R-HSA-9824585">
    <property type="pathway name" value="Regulation of MITF-M-dependent genes involved in pigmentation"/>
</dbReference>
<dbReference type="Reactome" id="R-HSA-9845323">
    <property type="pathway name" value="Regulation of endogenous retroelements by Piwi-interacting RNAs (piRNAs)"/>
</dbReference>
<dbReference type="SignaLink" id="Q6STE5"/>
<dbReference type="SIGNOR" id="Q6STE5"/>
<dbReference type="BioGRID-ORCS" id="6604">
    <property type="hits" value="17 hits in 1160 CRISPR screens"/>
</dbReference>
<dbReference type="CD-CODE" id="91857CE7">
    <property type="entry name" value="Nucleolus"/>
</dbReference>
<dbReference type="ChiTaRS" id="SMARCD3">
    <property type="organism name" value="human"/>
</dbReference>
<dbReference type="GeneWiki" id="SMARCD3"/>
<dbReference type="GenomeRNAi" id="6604"/>
<dbReference type="Pharos" id="Q6STE5">
    <property type="development level" value="Tbio"/>
</dbReference>
<dbReference type="PRO" id="PR:Q6STE5"/>
<dbReference type="Proteomes" id="UP000005640">
    <property type="component" value="Chromosome 7"/>
</dbReference>
<dbReference type="RNAct" id="Q6STE5">
    <property type="molecule type" value="protein"/>
</dbReference>
<dbReference type="Bgee" id="ENSG00000082014">
    <property type="expression patterns" value="Expressed in ganglionic eminence and 187 other cell types or tissues"/>
</dbReference>
<dbReference type="ExpressionAtlas" id="Q6STE5">
    <property type="expression patterns" value="baseline and differential"/>
</dbReference>
<dbReference type="GO" id="GO:0035060">
    <property type="term" value="C:brahma complex"/>
    <property type="evidence" value="ECO:0000303"/>
    <property type="project" value="ComplexPortal"/>
</dbReference>
<dbReference type="GO" id="GO:0000785">
    <property type="term" value="C:chromatin"/>
    <property type="evidence" value="ECO:0000314"/>
    <property type="project" value="BHF-UCL"/>
</dbReference>
<dbReference type="GO" id="GO:0005737">
    <property type="term" value="C:cytoplasm"/>
    <property type="evidence" value="ECO:0000314"/>
    <property type="project" value="BHF-UCL"/>
</dbReference>
<dbReference type="GO" id="GO:0071565">
    <property type="term" value="C:nBAF complex"/>
    <property type="evidence" value="ECO:0000250"/>
    <property type="project" value="UniProtKB"/>
</dbReference>
<dbReference type="GO" id="GO:0071564">
    <property type="term" value="C:npBAF complex"/>
    <property type="evidence" value="ECO:0000314"/>
    <property type="project" value="BHF-UCL"/>
</dbReference>
<dbReference type="GO" id="GO:0005654">
    <property type="term" value="C:nucleoplasm"/>
    <property type="evidence" value="ECO:0000314"/>
    <property type="project" value="HPA"/>
</dbReference>
<dbReference type="GO" id="GO:0005634">
    <property type="term" value="C:nucleus"/>
    <property type="evidence" value="ECO:0000314"/>
    <property type="project" value="BHF-UCL"/>
</dbReference>
<dbReference type="GO" id="GO:0016514">
    <property type="term" value="C:SWI/SNF complex"/>
    <property type="evidence" value="ECO:0000314"/>
    <property type="project" value="UniProtKB"/>
</dbReference>
<dbReference type="GO" id="GO:0003682">
    <property type="term" value="F:chromatin binding"/>
    <property type="evidence" value="ECO:0007669"/>
    <property type="project" value="Ensembl"/>
</dbReference>
<dbReference type="GO" id="GO:0140297">
    <property type="term" value="F:DNA-binding transcription factor binding"/>
    <property type="evidence" value="ECO:0000353"/>
    <property type="project" value="UniProtKB"/>
</dbReference>
<dbReference type="GO" id="GO:0016922">
    <property type="term" value="F:nuclear receptor binding"/>
    <property type="evidence" value="ECO:0000353"/>
    <property type="project" value="BHF-UCL"/>
</dbReference>
<dbReference type="GO" id="GO:0005102">
    <property type="term" value="F:signaling receptor binding"/>
    <property type="evidence" value="ECO:0000353"/>
    <property type="project" value="UniProtKB"/>
</dbReference>
<dbReference type="GO" id="GO:0003713">
    <property type="term" value="F:transcription coactivator activity"/>
    <property type="evidence" value="ECO:0000315"/>
    <property type="project" value="BHF-UCL"/>
</dbReference>
<dbReference type="GO" id="GO:0003712">
    <property type="term" value="F:transcription coregulator activity"/>
    <property type="evidence" value="ECO:0000318"/>
    <property type="project" value="GO_Central"/>
</dbReference>
<dbReference type="GO" id="GO:0001221">
    <property type="term" value="F:transcription coregulator binding"/>
    <property type="evidence" value="ECO:0000353"/>
    <property type="project" value="UniProtKB"/>
</dbReference>
<dbReference type="GO" id="GO:0003219">
    <property type="term" value="P:cardiac right ventricle formation"/>
    <property type="evidence" value="ECO:0007669"/>
    <property type="project" value="Ensembl"/>
</dbReference>
<dbReference type="GO" id="GO:0006338">
    <property type="term" value="P:chromatin remodeling"/>
    <property type="evidence" value="ECO:0000314"/>
    <property type="project" value="BHF-UCL"/>
</dbReference>
<dbReference type="GO" id="GO:0042692">
    <property type="term" value="P:muscle cell differentiation"/>
    <property type="evidence" value="ECO:0007669"/>
    <property type="project" value="Ensembl"/>
</dbReference>
<dbReference type="GO" id="GO:0007399">
    <property type="term" value="P:nervous system development"/>
    <property type="evidence" value="ECO:0007669"/>
    <property type="project" value="UniProtKB-KW"/>
</dbReference>
<dbReference type="GO" id="GO:0003407">
    <property type="term" value="P:neural retina development"/>
    <property type="evidence" value="ECO:0000270"/>
    <property type="project" value="BHF-UCL"/>
</dbReference>
<dbReference type="GO" id="GO:0006337">
    <property type="term" value="P:nucleosome disassembly"/>
    <property type="evidence" value="ECO:0000314"/>
    <property type="project" value="BHF-UCL"/>
</dbReference>
<dbReference type="GO" id="GO:0045597">
    <property type="term" value="P:positive regulation of cell differentiation"/>
    <property type="evidence" value="ECO:0000303"/>
    <property type="project" value="ComplexPortal"/>
</dbReference>
<dbReference type="GO" id="GO:0045893">
    <property type="term" value="P:positive regulation of DNA-templated transcription"/>
    <property type="evidence" value="ECO:0000314"/>
    <property type="project" value="UniProtKB"/>
</dbReference>
<dbReference type="GO" id="GO:2000781">
    <property type="term" value="P:positive regulation of double-strand break repair"/>
    <property type="evidence" value="ECO:0000303"/>
    <property type="project" value="ComplexPortal"/>
</dbReference>
<dbReference type="GO" id="GO:0010971">
    <property type="term" value="P:positive regulation of G2/M transition of mitotic cell cycle"/>
    <property type="evidence" value="ECO:0007669"/>
    <property type="project" value="Ensembl"/>
</dbReference>
<dbReference type="GO" id="GO:0045663">
    <property type="term" value="P:positive regulation of myoblast differentiation"/>
    <property type="evidence" value="ECO:0000303"/>
    <property type="project" value="ComplexPortal"/>
</dbReference>
<dbReference type="GO" id="GO:0002052">
    <property type="term" value="P:positive regulation of neuroblast proliferation"/>
    <property type="evidence" value="ECO:0000314"/>
    <property type="project" value="BHF-UCL"/>
</dbReference>
<dbReference type="GO" id="GO:0051152">
    <property type="term" value="P:positive regulation of smooth muscle cell differentiation"/>
    <property type="evidence" value="ECO:0007669"/>
    <property type="project" value="Ensembl"/>
</dbReference>
<dbReference type="GO" id="GO:0045582">
    <property type="term" value="P:positive regulation of T cell differentiation"/>
    <property type="evidence" value="ECO:0000303"/>
    <property type="project" value="ComplexPortal"/>
</dbReference>
<dbReference type="GO" id="GO:0070316">
    <property type="term" value="P:regulation of G0 to G1 transition"/>
    <property type="evidence" value="ECO:0000303"/>
    <property type="project" value="ComplexPortal"/>
</dbReference>
<dbReference type="GO" id="GO:2000045">
    <property type="term" value="P:regulation of G1/S transition of mitotic cell cycle"/>
    <property type="evidence" value="ECO:0000303"/>
    <property type="project" value="ComplexPortal"/>
</dbReference>
<dbReference type="GO" id="GO:0030071">
    <property type="term" value="P:regulation of mitotic metaphase/anaphase transition"/>
    <property type="evidence" value="ECO:0000303"/>
    <property type="project" value="ComplexPortal"/>
</dbReference>
<dbReference type="GO" id="GO:2000819">
    <property type="term" value="P:regulation of nucleotide-excision repair"/>
    <property type="evidence" value="ECO:0000303"/>
    <property type="project" value="ComplexPortal"/>
</dbReference>
<dbReference type="GO" id="GO:0006357">
    <property type="term" value="P:regulation of transcription by RNA polymerase II"/>
    <property type="evidence" value="ECO:0000315"/>
    <property type="project" value="BHF-UCL"/>
</dbReference>
<dbReference type="GO" id="GO:0003139">
    <property type="term" value="P:secondary heart field specification"/>
    <property type="evidence" value="ECO:0007669"/>
    <property type="project" value="Ensembl"/>
</dbReference>
<dbReference type="CDD" id="cd17676">
    <property type="entry name" value="SWIB_BAF60C"/>
    <property type="match status" value="1"/>
</dbReference>
<dbReference type="FunFam" id="1.10.245.10:FF:000001">
    <property type="entry name" value="SWI/SNF-related matrix-associated regulator of chromatin subfamily D member 3 isoform 1"/>
    <property type="match status" value="1"/>
</dbReference>
<dbReference type="Gene3D" id="1.10.245.10">
    <property type="entry name" value="SWIB/MDM2 domain"/>
    <property type="match status" value="1"/>
</dbReference>
<dbReference type="InterPro" id="IPR038043">
    <property type="entry name" value="SMARCD3_SWIB_dom"/>
</dbReference>
<dbReference type="InterPro" id="IPR019835">
    <property type="entry name" value="SWIB_domain"/>
</dbReference>
<dbReference type="InterPro" id="IPR036885">
    <property type="entry name" value="SWIB_MDM2_dom_sf"/>
</dbReference>
<dbReference type="InterPro" id="IPR003121">
    <property type="entry name" value="SWIB_MDM2_domain"/>
</dbReference>
<dbReference type="PANTHER" id="PTHR13844">
    <property type="entry name" value="SWI/SNF-RELATED MATRIX-ASSOCIATED ACTIN-DEPENDENT REGULATOR OF CHROMATIN SUBFAMILY D"/>
    <property type="match status" value="1"/>
</dbReference>
<dbReference type="Pfam" id="PF02201">
    <property type="entry name" value="SWIB"/>
    <property type="match status" value="1"/>
</dbReference>
<dbReference type="SMART" id="SM00151">
    <property type="entry name" value="SWIB"/>
    <property type="match status" value="1"/>
</dbReference>
<dbReference type="SUPFAM" id="SSF47592">
    <property type="entry name" value="SWIB/MDM2 domain"/>
    <property type="match status" value="1"/>
</dbReference>
<dbReference type="PROSITE" id="PS51925">
    <property type="entry name" value="SWIB_MDM2"/>
    <property type="match status" value="1"/>
</dbReference>
<organism>
    <name type="scientific">Homo sapiens</name>
    <name type="common">Human</name>
    <dbReference type="NCBI Taxonomy" id="9606"/>
    <lineage>
        <taxon>Eukaryota</taxon>
        <taxon>Metazoa</taxon>
        <taxon>Chordata</taxon>
        <taxon>Craniata</taxon>
        <taxon>Vertebrata</taxon>
        <taxon>Euteleostomi</taxon>
        <taxon>Mammalia</taxon>
        <taxon>Eutheria</taxon>
        <taxon>Euarchontoglires</taxon>
        <taxon>Primates</taxon>
        <taxon>Haplorrhini</taxon>
        <taxon>Catarrhini</taxon>
        <taxon>Hominidae</taxon>
        <taxon>Homo</taxon>
    </lineage>
</organism>